<gene>
    <name type="primary">CFAP418</name>
</gene>
<organism>
    <name type="scientific">Bos taurus</name>
    <name type="common">Bovine</name>
    <dbReference type="NCBI Taxonomy" id="9913"/>
    <lineage>
        <taxon>Eukaryota</taxon>
        <taxon>Metazoa</taxon>
        <taxon>Chordata</taxon>
        <taxon>Craniata</taxon>
        <taxon>Vertebrata</taxon>
        <taxon>Euteleostomi</taxon>
        <taxon>Mammalia</taxon>
        <taxon>Eutheria</taxon>
        <taxon>Laurasiatheria</taxon>
        <taxon>Artiodactyla</taxon>
        <taxon>Ruminantia</taxon>
        <taxon>Pecora</taxon>
        <taxon>Bovidae</taxon>
        <taxon>Bovinae</taxon>
        <taxon>Bos</taxon>
    </lineage>
</organism>
<keyword id="KW-0963">Cytoplasm</keyword>
<keyword id="KW-1185">Reference proteome</keyword>
<evidence type="ECO:0000250" key="1">
    <source>
        <dbReference type="UniProtKB" id="Q3UJP5"/>
    </source>
</evidence>
<evidence type="ECO:0000250" key="2">
    <source>
        <dbReference type="UniProtKB" id="Q96NL8"/>
    </source>
</evidence>
<evidence type="ECO:0000269" key="3">
    <source>
    </source>
</evidence>
<reference key="1">
    <citation type="journal article" date="2009" name="Genome Biol.">
        <title>A whole-genome assembly of the domestic cow, Bos taurus.</title>
        <authorList>
            <person name="Zimin A.V."/>
            <person name="Delcher A.L."/>
            <person name="Florea L."/>
            <person name="Kelley D.R."/>
            <person name="Schatz M.C."/>
            <person name="Puiu D."/>
            <person name="Hanrahan F."/>
            <person name="Pertea G."/>
            <person name="Van Tassell C.P."/>
            <person name="Sonstegard T.S."/>
            <person name="Marcais G."/>
            <person name="Roberts M."/>
            <person name="Subramanian P."/>
            <person name="Yorke J.A."/>
            <person name="Salzberg S.L."/>
        </authorList>
    </citation>
    <scope>NUCLEOTIDE SEQUENCE [LARGE SCALE GENOMIC DNA]</scope>
    <source>
        <strain>Hereford</strain>
    </source>
</reference>
<reference key="2">
    <citation type="journal article" date="2012" name="Am. J. Hum. Genet.">
        <title>Mutations in C8orf37, encoding a ciliary protein, are associated with autosomal-recessive retinal dystrophies with early macular involvement.</title>
        <authorList>
            <person name="Estrada-Cuzcano A."/>
            <person name="Neveling K."/>
            <person name="Kohl S."/>
            <person name="Banin E."/>
            <person name="Rotenstreich Y."/>
            <person name="Sharon D."/>
            <person name="Falik-Zaccai T.C."/>
            <person name="Hipp S."/>
            <person name="Roepman R."/>
            <person name="Wissinger B."/>
            <person name="Letteboer S.J."/>
            <person name="Mans D.A."/>
            <person name="Blokland E.A."/>
            <person name="Kwint M.P."/>
            <person name="Gijsen S.J."/>
            <person name="van Huet R.A."/>
            <person name="Collin R.W."/>
            <person name="Scheffer H."/>
            <person name="Veltman J.A."/>
            <person name="Zrenner E."/>
            <person name="den Hollander A.I."/>
            <person name="Klevering B.J."/>
            <person name="Cremers F.P."/>
        </authorList>
    </citation>
    <scope>SUBCELLULAR LOCATION</scope>
    <scope>TISSUE SPECIFICITY</scope>
</reference>
<feature type="chain" id="PRO_0000417026" description="Cilia- and flagella-associated protein 418">
    <location>
        <begin position="1"/>
        <end position="207"/>
    </location>
</feature>
<feature type="region of interest" description="Required for interaction with FAM161A" evidence="2">
    <location>
        <begin position="1"/>
        <end position="75"/>
    </location>
</feature>
<sequence length="207" mass="23550">MAEDLDELLDEVESKFCRPDPLRLGTVERPRGGGGGFFGHDQNRAEAKENLRSAETFEKEDDLDSLINEIFEEPHFDKKHFKLKSKSSGNTSVRASIQGLGKSCSPVYIGGSTVPCGIGTNASPRACDHLRCTACDFWVESYDDYRWDKSCDYLFFRNNMPEFHKLKTKLVKKKGTRAYACQCSWKAVEELTDLQTDHQLRWVCGKH</sequence>
<name>CF418_BOVIN</name>
<dbReference type="EMBL" id="DAAA02039458">
    <property type="status" value="NOT_ANNOTATED_CDS"/>
    <property type="molecule type" value="Genomic_DNA"/>
</dbReference>
<dbReference type="EMBL" id="DAAA02039459">
    <property type="status" value="NOT_ANNOTATED_CDS"/>
    <property type="molecule type" value="Genomic_DNA"/>
</dbReference>
<dbReference type="RefSeq" id="XP_002692859.1">
    <property type="nucleotide sequence ID" value="XM_002692813.7"/>
</dbReference>
<dbReference type="RefSeq" id="XP_871425.1">
    <property type="nucleotide sequence ID" value="XM_866332.8"/>
</dbReference>
<dbReference type="FunCoup" id="E1BC52">
    <property type="interactions" value="1736"/>
</dbReference>
<dbReference type="STRING" id="9913.ENSBTAP00000053773"/>
<dbReference type="PaxDb" id="9913-ENSBTAP00000053773"/>
<dbReference type="GeneID" id="614744"/>
<dbReference type="KEGG" id="bta:614744"/>
<dbReference type="CTD" id="157657"/>
<dbReference type="VEuPathDB" id="HostDB:ENSBTAG00000043970"/>
<dbReference type="eggNOG" id="ENOG502S1KM">
    <property type="taxonomic scope" value="Eukaryota"/>
</dbReference>
<dbReference type="HOGENOM" id="CLU_092833_0_0_1"/>
<dbReference type="InParanoid" id="E1BC52"/>
<dbReference type="OMA" id="AHGKRCC"/>
<dbReference type="OrthoDB" id="259905at2759"/>
<dbReference type="TreeFam" id="TF328851"/>
<dbReference type="Proteomes" id="UP000009136">
    <property type="component" value="Chromosome 14"/>
</dbReference>
<dbReference type="Bgee" id="ENSBTAG00000043970">
    <property type="expression patterns" value="Expressed in oviduct epithelium and 110 other cell types or tissues"/>
</dbReference>
<dbReference type="GO" id="GO:0005737">
    <property type="term" value="C:cytoplasm"/>
    <property type="evidence" value="ECO:0000250"/>
    <property type="project" value="UniProtKB"/>
</dbReference>
<dbReference type="GO" id="GO:0005829">
    <property type="term" value="C:cytosol"/>
    <property type="evidence" value="ECO:0000318"/>
    <property type="project" value="GO_Central"/>
</dbReference>
<dbReference type="GO" id="GO:0001917">
    <property type="term" value="C:photoreceptor inner segment"/>
    <property type="evidence" value="ECO:0000250"/>
    <property type="project" value="UniProtKB"/>
</dbReference>
<dbReference type="GO" id="GO:0008594">
    <property type="term" value="P:photoreceptor cell morphogenesis"/>
    <property type="evidence" value="ECO:0000250"/>
    <property type="project" value="UniProtKB"/>
</dbReference>
<dbReference type="InterPro" id="IPR029239">
    <property type="entry name" value="CFAP418"/>
</dbReference>
<dbReference type="PANTHER" id="PTHR33958:SF1">
    <property type="entry name" value="CILIA- AND FLAGELLA-ASSOCIATED PROTEIN 418"/>
    <property type="match status" value="1"/>
</dbReference>
<dbReference type="PANTHER" id="PTHR33958">
    <property type="entry name" value="PROTEIN C8ORF37"/>
    <property type="match status" value="1"/>
</dbReference>
<dbReference type="Pfam" id="PF14996">
    <property type="entry name" value="RMP"/>
    <property type="match status" value="1"/>
</dbReference>
<accession>E1BC52</accession>
<comment type="function">
    <text evidence="1">May be involved in photoreceptor outer segment disk morphogenesis (By similarity).</text>
</comment>
<comment type="subunit">
    <text evidence="2">Interacts (via N-terminus) with FAM161A (via central region); the interaction is direct.</text>
</comment>
<comment type="subcellular location">
    <subcellularLocation>
        <location evidence="1">Cytoplasm</location>
    </subcellularLocation>
    <subcellularLocation>
        <location evidence="1">Photoreceptor inner segment</location>
    </subcellularLocation>
    <text evidence="1">In the retina, located at the base of the primary cilium (By similarity). Expressed throughout photoreceptors cell body including the basal body, inner segment and synaptic terminus, but not in the outer segment (By similarity).</text>
</comment>
<comment type="tissue specificity">
    <text evidence="3">Expressed in the retina (at protein level).</text>
</comment>
<proteinExistence type="evidence at protein level"/>
<protein>
    <recommendedName>
        <fullName>Cilia- and flagella-associated protein 418</fullName>
    </recommendedName>
</protein>